<keyword id="KW-0137">Centromere</keyword>
<keyword id="KW-0158">Chromosome</keyword>
<keyword id="KW-0175">Coiled coil</keyword>
<keyword id="KW-0995">Kinetochore</keyword>
<keyword id="KW-0539">Nucleus</keyword>
<keyword id="KW-1185">Reference proteome</keyword>
<dbReference type="EMBL" id="CR382123">
    <property type="protein sequence ID" value="CAH01085.1"/>
    <property type="molecule type" value="Genomic_DNA"/>
</dbReference>
<dbReference type="RefSeq" id="XP_452234.1">
    <property type="nucleotide sequence ID" value="XM_452234.1"/>
</dbReference>
<dbReference type="SMR" id="Q6CV05"/>
<dbReference type="FunCoup" id="Q6CV05">
    <property type="interactions" value="33"/>
</dbReference>
<dbReference type="STRING" id="284590.Q6CV05"/>
<dbReference type="PaxDb" id="284590-Q6CV05"/>
<dbReference type="KEGG" id="kla:KLLA0_C00891g"/>
<dbReference type="eggNOG" id="ENOG502S19U">
    <property type="taxonomic scope" value="Eukaryota"/>
</dbReference>
<dbReference type="HOGENOM" id="CLU_062083_0_0_1"/>
<dbReference type="InParanoid" id="Q6CV05"/>
<dbReference type="OMA" id="GNEIDEC"/>
<dbReference type="Proteomes" id="UP000000598">
    <property type="component" value="Chromosome C"/>
</dbReference>
<dbReference type="GO" id="GO:0000776">
    <property type="term" value="C:kinetochore"/>
    <property type="evidence" value="ECO:0000250"/>
    <property type="project" value="UniProtKB"/>
</dbReference>
<dbReference type="GO" id="GO:0180019">
    <property type="term" value="C:Knl1/Spc105 complex"/>
    <property type="evidence" value="ECO:0000250"/>
    <property type="project" value="UniProtKB"/>
</dbReference>
<dbReference type="GO" id="GO:0005634">
    <property type="term" value="C:nucleus"/>
    <property type="evidence" value="ECO:0007669"/>
    <property type="project" value="UniProtKB-SubCell"/>
</dbReference>
<dbReference type="GO" id="GO:0031619">
    <property type="term" value="P:homologous chromosome orientation in meiotic metaphase I"/>
    <property type="evidence" value="ECO:0000250"/>
    <property type="project" value="UniProtKB"/>
</dbReference>
<dbReference type="GO" id="GO:1905325">
    <property type="term" value="P:regulation of meiosis I spindle assembly checkpoint"/>
    <property type="evidence" value="ECO:0000250"/>
    <property type="project" value="UniProtKB"/>
</dbReference>
<dbReference type="InterPro" id="IPR031361">
    <property type="entry name" value="Kre28"/>
</dbReference>
<dbReference type="Pfam" id="PF17097">
    <property type="entry name" value="Kre28"/>
    <property type="match status" value="1"/>
</dbReference>
<dbReference type="SUPFAM" id="SSF82649">
    <property type="entry name" value="SufE/NifU"/>
    <property type="match status" value="1"/>
</dbReference>
<accession>Q6CV05</accession>
<reference key="1">
    <citation type="journal article" date="2004" name="Nature">
        <title>Genome evolution in yeasts.</title>
        <authorList>
            <person name="Dujon B."/>
            <person name="Sherman D."/>
            <person name="Fischer G."/>
            <person name="Durrens P."/>
            <person name="Casaregola S."/>
            <person name="Lafontaine I."/>
            <person name="de Montigny J."/>
            <person name="Marck C."/>
            <person name="Neuveglise C."/>
            <person name="Talla E."/>
            <person name="Goffard N."/>
            <person name="Frangeul L."/>
            <person name="Aigle M."/>
            <person name="Anthouard V."/>
            <person name="Babour A."/>
            <person name="Barbe V."/>
            <person name="Barnay S."/>
            <person name="Blanchin S."/>
            <person name="Beckerich J.-M."/>
            <person name="Beyne E."/>
            <person name="Bleykasten C."/>
            <person name="Boisrame A."/>
            <person name="Boyer J."/>
            <person name="Cattolico L."/>
            <person name="Confanioleri F."/>
            <person name="de Daruvar A."/>
            <person name="Despons L."/>
            <person name="Fabre E."/>
            <person name="Fairhead C."/>
            <person name="Ferry-Dumazet H."/>
            <person name="Groppi A."/>
            <person name="Hantraye F."/>
            <person name="Hennequin C."/>
            <person name="Jauniaux N."/>
            <person name="Joyet P."/>
            <person name="Kachouri R."/>
            <person name="Kerrest A."/>
            <person name="Koszul R."/>
            <person name="Lemaire M."/>
            <person name="Lesur I."/>
            <person name="Ma L."/>
            <person name="Muller H."/>
            <person name="Nicaud J.-M."/>
            <person name="Nikolski M."/>
            <person name="Oztas S."/>
            <person name="Ozier-Kalogeropoulos O."/>
            <person name="Pellenz S."/>
            <person name="Potier S."/>
            <person name="Richard G.-F."/>
            <person name="Straub M.-L."/>
            <person name="Suleau A."/>
            <person name="Swennen D."/>
            <person name="Tekaia F."/>
            <person name="Wesolowski-Louvel M."/>
            <person name="Westhof E."/>
            <person name="Wirth B."/>
            <person name="Zeniou-Meyer M."/>
            <person name="Zivanovic Y."/>
            <person name="Bolotin-Fukuhara M."/>
            <person name="Thierry A."/>
            <person name="Bouchier C."/>
            <person name="Caudron B."/>
            <person name="Scarpelli C."/>
            <person name="Gaillardin C."/>
            <person name="Weissenbach J."/>
            <person name="Wincker P."/>
            <person name="Souciet J.-L."/>
        </authorList>
    </citation>
    <scope>NUCLEOTIDE SEQUENCE [LARGE SCALE GENOMIC DNA]</scope>
    <source>
        <strain>ATCC 8585 / CBS 2359 / DSM 70799 / NBRC 1267 / NRRL Y-1140 / WM37</strain>
    </source>
</reference>
<name>ZWINT_KLULA</name>
<comment type="function">
    <text evidence="1">Acts as a component of the outer kinetochore KNL1 complex that facilitates microtubule-kinetochore interactions and the spindle assembly checkpoint. Kinetochores, consisting of a centromere-associated inner segment and a microtubule-contacting outer segment, play a crucial role in chromosome segregation by mediating the physical connection between centromeric DNA and spindle microtubules. The outer kinetochore is made up of the ten-subunit KMN network, comprising the MIS12, NDC80 and KNL1 complexes, and auxiliary microtubule-associated components; together they connect the outer kinetochore with the inner kinetochore, bind microtubules, and mediate interactions with mitotic checkpoint proteins that delay anaphase until chromosomes are bioriented on the spindle.</text>
</comment>
<comment type="subunit">
    <text evidence="1">Component of the KNL1/SPC105 complex composed of SPC105 and KRE28. Part of the ten-subunit outer kinetochore KMN network that includes the KNL1, MIS12 and NDC80 complexes.</text>
</comment>
<comment type="subcellular location">
    <subcellularLocation>
        <location evidence="1">Nucleus</location>
    </subcellularLocation>
    <subcellularLocation>
        <location evidence="1">Chromosome</location>
        <location evidence="1">Centromere</location>
        <location evidence="1">Kinetochore</location>
    </subcellularLocation>
</comment>
<comment type="similarity">
    <text evidence="3">Belongs to the KRE28 family.</text>
</comment>
<sequence length="351" mass="41058">MTHYHSEYYSEVEKFEYQVTHVTEQILQEQDRLRGSTLHEYNQTILQLVSDYEMFNSNGQCDPSEINLPLEKLESWTNSLKQIHLELESIDNFLRYAIPSDQTILNLSKFNESKYETLQAEVSELRDINVVQLQKEIESLQQQITTKSDENLLISEKIKESCLEASQDIDQCWKLLEQLEAYENANPSTEVITTTDPAFSTYNQWKWNQLAESELKHINQQLITLRATKEKLDKVFSKRSELETSPKSIETFTSYQLLSQLWRSKFIRQLLPDIANLEVYPQSGKLKFEVGIMQVIMQIESGIIKSVSLFSYELSYDRIETIKEDILGRIEHQKSLFKVLVVITDYIVNSL</sequence>
<evidence type="ECO:0000250" key="1">
    <source>
        <dbReference type="UniProtKB" id="Q04431"/>
    </source>
</evidence>
<evidence type="ECO:0000255" key="2"/>
<evidence type="ECO:0000305" key="3"/>
<protein>
    <recommendedName>
        <fullName evidence="3">Outer kinetochore KNL1 complex subunit KRE28</fullName>
    </recommendedName>
    <alternativeName>
        <fullName>Spindle pole body component KRE28</fullName>
    </alternativeName>
</protein>
<feature type="chain" id="PRO_0000408562" description="Outer kinetochore KNL1 complex subunit KRE28">
    <location>
        <begin position="1"/>
        <end position="351"/>
    </location>
</feature>
<feature type="coiled-coil region" evidence="2">
    <location>
        <begin position="124"/>
        <end position="153"/>
    </location>
</feature>
<feature type="coiled-coil region" evidence="2">
    <location>
        <begin position="208"/>
        <end position="234"/>
    </location>
</feature>
<organism>
    <name type="scientific">Kluyveromyces lactis (strain ATCC 8585 / CBS 2359 / DSM 70799 / NBRC 1267 / NRRL Y-1140 / WM37)</name>
    <name type="common">Yeast</name>
    <name type="synonym">Candida sphaerica</name>
    <dbReference type="NCBI Taxonomy" id="284590"/>
    <lineage>
        <taxon>Eukaryota</taxon>
        <taxon>Fungi</taxon>
        <taxon>Dikarya</taxon>
        <taxon>Ascomycota</taxon>
        <taxon>Saccharomycotina</taxon>
        <taxon>Saccharomycetes</taxon>
        <taxon>Saccharomycetales</taxon>
        <taxon>Saccharomycetaceae</taxon>
        <taxon>Kluyveromyces</taxon>
    </lineage>
</organism>
<gene>
    <name type="primary">KRE28</name>
    <name type="ordered locus">KLLA0C00891g</name>
</gene>
<proteinExistence type="inferred from homology"/>